<name>AGL27_ARATH</name>
<reference key="1">
    <citation type="journal article" date="2000" name="Plant J.">
        <title>MADS-box gene evolution beyond flowers: expression in pollen, endosperm, guard cells, roots and trichomes.</title>
        <authorList>
            <person name="Alvarez-Buylla E.R."/>
            <person name="Liljegren S.J."/>
            <person name="Pelaz S."/>
            <person name="Gold S.E."/>
            <person name="Burgeff C."/>
            <person name="Ditta G.S."/>
            <person name="Vergara-Silva F."/>
            <person name="Yanofsky M.F."/>
        </authorList>
    </citation>
    <scope>NUCLEOTIDE SEQUENCE [MRNA] (ISOFORMS 2 AND 3)</scope>
    <scope>TISSUE SPECIFICITY</scope>
    <source>
        <strain>cv. Columbia</strain>
    </source>
</reference>
<reference key="2">
    <citation type="journal article" date="2001" name="Plant Physiol.">
        <title>Regulation of flowering in Arabidopsis by an FLC homologue.</title>
        <authorList>
            <person name="Ratcliffe O.J."/>
            <person name="Nadzan G.C."/>
            <person name="Reuber T.L."/>
            <person name="Riechmann J.L."/>
        </authorList>
    </citation>
    <scope>NUCLEOTIDE SEQUENCE [MRNA] (ISOFORM 1)</scope>
    <scope>FUNCTION</scope>
    <scope>TISSUE SPECIFICITY</scope>
    <scope>REPRESSION BY VERNALIZATION</scope>
    <source>
        <strain>cv. Columbia</strain>
    </source>
</reference>
<reference key="3">
    <citation type="journal article" date="2003" name="Plant Cell">
        <title>Molecular and phylogenetic analyses of the complete MADS-box transcription factor family in Arabidopsis: new openings to the MADS world.</title>
        <authorList>
            <person name="Parenicova L."/>
            <person name="de Folter S."/>
            <person name="Kieffer M."/>
            <person name="Horner D.S."/>
            <person name="Favalli C."/>
            <person name="Busscher J."/>
            <person name="Cook H.E."/>
            <person name="Ingram R.M."/>
            <person name="Kater M.M."/>
            <person name="Davies B."/>
            <person name="Angenent G.C."/>
            <person name="Colombo L."/>
        </authorList>
    </citation>
    <scope>NUCLEOTIDE SEQUENCE [MRNA] (ISOFORM 4)</scope>
    <scope>TISSUE SPECIFICITY</scope>
    <scope>GENE FAMILY</scope>
    <source>
        <strain>cv. Columbia</strain>
        <tissue>Rosette leaf</tissue>
    </source>
</reference>
<reference key="4">
    <citation type="submission" date="2001-11" db="EMBL/GenBank/DDBJ databases">
        <title>The control of flowering time by FLC orthologues in Brassica napus.</title>
        <authorList>
            <person name="Million T."/>
            <person name="Sheldon C.C."/>
            <person name="Helliwell C.A."/>
            <person name="Dennis E.S."/>
            <person name="Peacock W.J."/>
        </authorList>
    </citation>
    <scope>NUCLEOTIDE SEQUENCE [MRNA] (ISOFORM 1)</scope>
    <source>
        <strain>cv. Col-2</strain>
    </source>
</reference>
<reference key="5">
    <citation type="journal article" date="2000" name="Nature">
        <title>Sequence and analysis of chromosome 1 of the plant Arabidopsis thaliana.</title>
        <authorList>
            <person name="Theologis A."/>
            <person name="Ecker J.R."/>
            <person name="Palm C.J."/>
            <person name="Federspiel N.A."/>
            <person name="Kaul S."/>
            <person name="White O."/>
            <person name="Alonso J."/>
            <person name="Altafi H."/>
            <person name="Araujo R."/>
            <person name="Bowman C.L."/>
            <person name="Brooks S.Y."/>
            <person name="Buehler E."/>
            <person name="Chan A."/>
            <person name="Chao Q."/>
            <person name="Chen H."/>
            <person name="Cheuk R.F."/>
            <person name="Chin C.W."/>
            <person name="Chung M.K."/>
            <person name="Conn L."/>
            <person name="Conway A.B."/>
            <person name="Conway A.R."/>
            <person name="Creasy T.H."/>
            <person name="Dewar K."/>
            <person name="Dunn P."/>
            <person name="Etgu P."/>
            <person name="Feldblyum T.V."/>
            <person name="Feng J.-D."/>
            <person name="Fong B."/>
            <person name="Fujii C.Y."/>
            <person name="Gill J.E."/>
            <person name="Goldsmith A.D."/>
            <person name="Haas B."/>
            <person name="Hansen N.F."/>
            <person name="Hughes B."/>
            <person name="Huizar L."/>
            <person name="Hunter J.L."/>
            <person name="Jenkins J."/>
            <person name="Johnson-Hopson C."/>
            <person name="Khan S."/>
            <person name="Khaykin E."/>
            <person name="Kim C.J."/>
            <person name="Koo H.L."/>
            <person name="Kremenetskaia I."/>
            <person name="Kurtz D.B."/>
            <person name="Kwan A."/>
            <person name="Lam B."/>
            <person name="Langin-Hooper S."/>
            <person name="Lee A."/>
            <person name="Lee J.M."/>
            <person name="Lenz C.A."/>
            <person name="Li J.H."/>
            <person name="Li Y.-P."/>
            <person name="Lin X."/>
            <person name="Liu S.X."/>
            <person name="Liu Z.A."/>
            <person name="Luros J.S."/>
            <person name="Maiti R."/>
            <person name="Marziali A."/>
            <person name="Militscher J."/>
            <person name="Miranda M."/>
            <person name="Nguyen M."/>
            <person name="Nierman W.C."/>
            <person name="Osborne B.I."/>
            <person name="Pai G."/>
            <person name="Peterson J."/>
            <person name="Pham P.K."/>
            <person name="Rizzo M."/>
            <person name="Rooney T."/>
            <person name="Rowley D."/>
            <person name="Sakano H."/>
            <person name="Salzberg S.L."/>
            <person name="Schwartz J.R."/>
            <person name="Shinn P."/>
            <person name="Southwick A.M."/>
            <person name="Sun H."/>
            <person name="Tallon L.J."/>
            <person name="Tambunga G."/>
            <person name="Toriumi M.J."/>
            <person name="Town C.D."/>
            <person name="Utterback T."/>
            <person name="Van Aken S."/>
            <person name="Vaysberg M."/>
            <person name="Vysotskaia V.S."/>
            <person name="Walker M."/>
            <person name="Wu D."/>
            <person name="Yu G."/>
            <person name="Fraser C.M."/>
            <person name="Venter J.C."/>
            <person name="Davis R.W."/>
        </authorList>
    </citation>
    <scope>NUCLEOTIDE SEQUENCE [LARGE SCALE GENOMIC DNA]</scope>
    <source>
        <strain>cv. Columbia</strain>
    </source>
</reference>
<reference key="6">
    <citation type="journal article" date="2017" name="Plant J.">
        <title>Araport11: a complete reannotation of the Arabidopsis thaliana reference genome.</title>
        <authorList>
            <person name="Cheng C.Y."/>
            <person name="Krishnakumar V."/>
            <person name="Chan A.P."/>
            <person name="Thibaud-Nissen F."/>
            <person name="Schobel S."/>
            <person name="Town C.D."/>
        </authorList>
    </citation>
    <scope>GENOME REANNOTATION</scope>
    <source>
        <strain>cv. Columbia</strain>
    </source>
</reference>
<reference key="7">
    <citation type="journal article" date="2002" name="Science">
        <title>Functional annotation of a full-length Arabidopsis cDNA collection.</title>
        <authorList>
            <person name="Seki M."/>
            <person name="Narusaka M."/>
            <person name="Kamiya A."/>
            <person name="Ishida J."/>
            <person name="Satou M."/>
            <person name="Sakurai T."/>
            <person name="Nakajima M."/>
            <person name="Enju A."/>
            <person name="Akiyama K."/>
            <person name="Oono Y."/>
            <person name="Muramatsu M."/>
            <person name="Hayashizaki Y."/>
            <person name="Kawai J."/>
            <person name="Carninci P."/>
            <person name="Itoh M."/>
            <person name="Ishii Y."/>
            <person name="Arakawa T."/>
            <person name="Shibata K."/>
            <person name="Shinagawa A."/>
            <person name="Shinozaki K."/>
        </authorList>
    </citation>
    <scope>NUCLEOTIDE SEQUENCE [LARGE SCALE MRNA] (ISOFORM 1)</scope>
    <source>
        <strain>cv. Columbia</strain>
    </source>
</reference>
<reference key="8">
    <citation type="journal article" date="2003" name="Science">
        <title>Empirical analysis of transcriptional activity in the Arabidopsis genome.</title>
        <authorList>
            <person name="Yamada K."/>
            <person name="Lim J."/>
            <person name="Dale J.M."/>
            <person name="Chen H."/>
            <person name="Shinn P."/>
            <person name="Palm C.J."/>
            <person name="Southwick A.M."/>
            <person name="Wu H.C."/>
            <person name="Kim C.J."/>
            <person name="Nguyen M."/>
            <person name="Pham P.K."/>
            <person name="Cheuk R.F."/>
            <person name="Karlin-Newmann G."/>
            <person name="Liu S.X."/>
            <person name="Lam B."/>
            <person name="Sakano H."/>
            <person name="Wu T."/>
            <person name="Yu G."/>
            <person name="Miranda M."/>
            <person name="Quach H.L."/>
            <person name="Tripp M."/>
            <person name="Chang C.H."/>
            <person name="Lee J.M."/>
            <person name="Toriumi M.J."/>
            <person name="Chan M.M."/>
            <person name="Tang C.C."/>
            <person name="Onodera C.S."/>
            <person name="Deng J.M."/>
            <person name="Akiyama K."/>
            <person name="Ansari Y."/>
            <person name="Arakawa T."/>
            <person name="Banh J."/>
            <person name="Banno F."/>
            <person name="Bowser L."/>
            <person name="Brooks S.Y."/>
            <person name="Carninci P."/>
            <person name="Chao Q."/>
            <person name="Choy N."/>
            <person name="Enju A."/>
            <person name="Goldsmith A.D."/>
            <person name="Gurjal M."/>
            <person name="Hansen N.F."/>
            <person name="Hayashizaki Y."/>
            <person name="Johnson-Hopson C."/>
            <person name="Hsuan V.W."/>
            <person name="Iida K."/>
            <person name="Karnes M."/>
            <person name="Khan S."/>
            <person name="Koesema E."/>
            <person name="Ishida J."/>
            <person name="Jiang P.X."/>
            <person name="Jones T."/>
            <person name="Kawai J."/>
            <person name="Kamiya A."/>
            <person name="Meyers C."/>
            <person name="Nakajima M."/>
            <person name="Narusaka M."/>
            <person name="Seki M."/>
            <person name="Sakurai T."/>
            <person name="Satou M."/>
            <person name="Tamse R."/>
            <person name="Vaysberg M."/>
            <person name="Wallender E.K."/>
            <person name="Wong C."/>
            <person name="Yamamura Y."/>
            <person name="Yuan S."/>
            <person name="Shinozaki K."/>
            <person name="Davis R.W."/>
            <person name="Theologis A."/>
            <person name="Ecker J.R."/>
        </authorList>
    </citation>
    <scope>NUCLEOTIDE SEQUENCE [LARGE SCALE MRNA] (ISOFORM 1)</scope>
    <source>
        <strain>cv. Columbia</strain>
    </source>
</reference>
<reference key="9">
    <citation type="submission" date="2006-07" db="EMBL/GenBank/DDBJ databases">
        <title>Large-scale analysis of RIKEN Arabidopsis full-length (RAFL) cDNAs.</title>
        <authorList>
            <person name="Totoki Y."/>
            <person name="Seki M."/>
            <person name="Ishida J."/>
            <person name="Nakajima M."/>
            <person name="Enju A."/>
            <person name="Kamiya A."/>
            <person name="Narusaka M."/>
            <person name="Shin-i T."/>
            <person name="Nakagawa M."/>
            <person name="Sakamoto N."/>
            <person name="Oishi K."/>
            <person name="Kohara Y."/>
            <person name="Kobayashi M."/>
            <person name="Toyoda A."/>
            <person name="Sakaki Y."/>
            <person name="Sakurai T."/>
            <person name="Iida K."/>
            <person name="Akiyama K."/>
            <person name="Satou M."/>
            <person name="Toyoda T."/>
            <person name="Konagaya A."/>
            <person name="Carninci P."/>
            <person name="Kawai J."/>
            <person name="Hayashizaki Y."/>
            <person name="Shinozaki K."/>
        </authorList>
    </citation>
    <scope>NUCLEOTIDE SEQUENCE [LARGE SCALE MRNA] (ISOFORM 1)</scope>
    <source>
        <strain>cv. Columbia</strain>
    </source>
</reference>
<reference key="10">
    <citation type="submission" date="2002-03" db="EMBL/GenBank/DDBJ databases">
        <title>Full-length cDNA from Arabidopsis thaliana.</title>
        <authorList>
            <person name="Brover V.V."/>
            <person name="Troukhan M.E."/>
            <person name="Alexandrov N.A."/>
            <person name="Lu Y.-P."/>
            <person name="Flavell R.B."/>
            <person name="Feldmann K.A."/>
        </authorList>
    </citation>
    <scope>NUCLEOTIDE SEQUENCE [LARGE SCALE MRNA] (ISOFORM 1)</scope>
</reference>
<reference key="11">
    <citation type="journal article" date="2003" name="Mol. Biol. Evol.">
        <title>Evolution and divergence of the MADS-box gene family based on genome-wide expression analyses.</title>
        <authorList>
            <person name="Kofuji R."/>
            <person name="Sumikawa N."/>
            <person name="Yamasaki M."/>
            <person name="Kondo K."/>
            <person name="Ueda K."/>
            <person name="Ito M."/>
            <person name="Hasebe M."/>
        </authorList>
    </citation>
    <scope>TISSUE SPECIFICITY</scope>
    <scope>GENE FAMILY</scope>
    <source>
        <strain>cv. Columbia</strain>
    </source>
</reference>
<reference key="12">
    <citation type="journal article" date="2003" name="Plant Mol. Biol.">
        <title>Genetic interactions between FLM and other flowering-time genes in Arabidopsis thaliana.</title>
        <authorList>
            <person name="Scortecci K."/>
            <person name="Michaels S.D."/>
            <person name="Amasino R.M."/>
        </authorList>
    </citation>
    <scope>FUNCTION</scope>
    <scope>DISRUPTION PHENOTYPE</scope>
    <source>
        <strain>cv. Columbia</strain>
        <strain>cv. Wassilewskija</strain>
    </source>
</reference>
<reference key="13">
    <citation type="journal article" date="2004" name="Genes Dev.">
        <title>PAF1-complex-mediated histone methylation of FLOWERING LOCUS C chromatin is required for the vernalization-responsive, winter-annual habit in Arabidopsis.</title>
        <authorList>
            <person name="He Y."/>
            <person name="Doyle M.R."/>
            <person name="Amasino R.M."/>
        </authorList>
    </citation>
    <scope>INDUCTION BY ELF7 AND ELF8</scope>
</reference>
<reference key="14">
    <citation type="journal article" date="2005" name="Plant Cell">
        <title>Comprehensive interaction map of the Arabidopsis MADS Box transcription factors.</title>
        <authorList>
            <person name="de Folter S."/>
            <person name="Immink R.G.H."/>
            <person name="Kieffer M."/>
            <person name="Parenicova L."/>
            <person name="Henz S.R."/>
            <person name="Weigel D."/>
            <person name="Busscher M."/>
            <person name="Kooiker M."/>
            <person name="Colombo L."/>
            <person name="Kater M.M."/>
            <person name="Davies B."/>
            <person name="Angenent G.C."/>
        </authorList>
    </citation>
    <scope>INTERACTION WITH AGL39; AGL97 AND AGL74</scope>
</reference>
<reference key="15">
    <citation type="journal article" date="2005" name="Plant J.">
        <title>HUA2 is required for the expression of floral repressors in Arabidopsis thaliana.</title>
        <authorList>
            <person name="Doyle M.R."/>
            <person name="Bizzell C.M."/>
            <person name="Keller M.R."/>
            <person name="Michaels S.D."/>
            <person name="Song J."/>
            <person name="Noh Y.-S."/>
            <person name="Amasino R.M."/>
        </authorList>
    </citation>
    <scope>INDUCTION BY HUA2</scope>
</reference>
<reference key="16">
    <citation type="journal article" date="2005" name="Proc. Natl. Acad. Sci. U.S.A.">
        <title>Quantitative trait locus mapping and DNA array hybridization identify an FLM deletion as a cause for natural flowering-time variation.</title>
        <authorList>
            <person name="Werner J.D."/>
            <person name="Borevitz J.O."/>
            <person name="Warthmann N."/>
            <person name="Trainer G.T."/>
            <person name="Ecker J.R."/>
            <person name="Chory J."/>
            <person name="Weigel D."/>
        </authorList>
    </citation>
    <scope>FUNCTION</scope>
    <scope>DISRUPTION PHENOTYPE</scope>
    <source>
        <strain>cv. Col-3</strain>
        <strain>cv. Col-5</strain>
        <strain>cv. Nd-1</strain>
    </source>
</reference>
<reference key="17">
    <citation type="journal article" date="2006" name="Genes Dev.">
        <title>A PHD finger protein involved in both the vernalization and photoperiod pathways in Arabidopsis.</title>
        <authorList>
            <person name="Sung S."/>
            <person name="Schmitz R.J."/>
            <person name="Amasino R.M."/>
        </authorList>
    </citation>
    <scope>REPRESSION BY VIL1</scope>
</reference>
<reference key="18">
    <citation type="journal article" date="2008" name="J. Exp. Bot.">
        <title>FLC or not FLC: the other side of vernalization.</title>
        <authorList>
            <person name="Alexandre C.M."/>
            <person name="Hennig L."/>
        </authorList>
    </citation>
    <scope>REVIEW</scope>
</reference>
<reference key="19">
    <citation type="journal article" date="2008" name="Plant Physiol.">
        <title>Diversification of photoperiodic response patterns in a collection of early-flowering mutants of Arabidopsis.</title>
        <authorList>
            <person name="Pouteau S."/>
            <person name="Carre I."/>
            <person name="Gaudin V."/>
            <person name="Ferret V."/>
            <person name="Lefebvre D."/>
            <person name="Wilson M."/>
        </authorList>
    </citation>
    <scope>FUNCTION</scope>
    <scope>DISRUPTION PHENOTYPE</scope>
</reference>
<evidence type="ECO:0000255" key="1">
    <source>
        <dbReference type="PROSITE-ProRule" id="PRU00251"/>
    </source>
</evidence>
<evidence type="ECO:0000255" key="2">
    <source>
        <dbReference type="PROSITE-ProRule" id="PRU00629"/>
    </source>
</evidence>
<evidence type="ECO:0000256" key="3">
    <source>
        <dbReference type="SAM" id="MobiDB-lite"/>
    </source>
</evidence>
<evidence type="ECO:0000269" key="4">
    <source>
    </source>
</evidence>
<evidence type="ECO:0000269" key="5">
    <source>
    </source>
</evidence>
<evidence type="ECO:0000269" key="6">
    <source>
    </source>
</evidence>
<evidence type="ECO:0000269" key="7">
    <source>
    </source>
</evidence>
<evidence type="ECO:0000269" key="8">
    <source>
    </source>
</evidence>
<evidence type="ECO:0000269" key="9">
    <source>
    </source>
</evidence>
<evidence type="ECO:0000269" key="10">
    <source>
    </source>
</evidence>
<evidence type="ECO:0000269" key="11">
    <source>
    </source>
</evidence>
<evidence type="ECO:0000269" key="12">
    <source>
    </source>
</evidence>
<evidence type="ECO:0000269" key="13">
    <source>
    </source>
</evidence>
<evidence type="ECO:0000269" key="14">
    <source>
    </source>
</evidence>
<evidence type="ECO:0000303" key="15">
    <source>
    </source>
</evidence>
<evidence type="ECO:0000303" key="16">
    <source>
    </source>
</evidence>
<evidence type="ECO:0000305" key="17"/>
<evidence type="ECO:0000305" key="18">
    <source>
    </source>
</evidence>
<proteinExistence type="evidence at protein level"/>
<gene>
    <name type="primary">AGL27</name>
    <name type="synonym">FK1</name>
    <name type="synonym">FLM</name>
    <name type="synonym">MAF1</name>
    <name type="ordered locus">At1g77080</name>
    <name type="ORF">F22K20.15</name>
</gene>
<keyword id="KW-0025">Alternative splicing</keyword>
<keyword id="KW-0217">Developmental protein</keyword>
<keyword id="KW-0238">DNA-binding</keyword>
<keyword id="KW-0287">Flowering</keyword>
<keyword id="KW-0539">Nucleus</keyword>
<keyword id="KW-1185">Reference proteome</keyword>
<keyword id="KW-0804">Transcription</keyword>
<keyword id="KW-0805">Transcription regulation</keyword>
<dbReference type="EMBL" id="AF312665">
    <property type="protein sequence ID" value="AAG37902.1"/>
    <property type="molecule type" value="mRNA"/>
</dbReference>
<dbReference type="EMBL" id="AF312666">
    <property type="protein sequence ID" value="AAG37903.1"/>
    <property type="molecule type" value="mRNA"/>
</dbReference>
<dbReference type="EMBL" id="AF342808">
    <property type="protein sequence ID" value="AAK37527.1"/>
    <property type="molecule type" value="mRNA"/>
</dbReference>
<dbReference type="EMBL" id="AY141210">
    <property type="protein sequence ID" value="AAN52774.1"/>
    <property type="molecule type" value="mRNA"/>
</dbReference>
<dbReference type="EMBL" id="AY034083">
    <property type="protein sequence ID" value="AAK54440.1"/>
    <property type="molecule type" value="mRNA"/>
</dbReference>
<dbReference type="EMBL" id="AC002291">
    <property type="protein sequence ID" value="AAC00628.1"/>
    <property type="status" value="ALT_SEQ"/>
    <property type="molecule type" value="Genomic_DNA"/>
</dbReference>
<dbReference type="EMBL" id="CP002684">
    <property type="protein sequence ID" value="AEE35929.1"/>
    <property type="molecule type" value="Genomic_DNA"/>
</dbReference>
<dbReference type="EMBL" id="CP002684">
    <property type="protein sequence ID" value="AEE35930.1"/>
    <property type="molecule type" value="Genomic_DNA"/>
</dbReference>
<dbReference type="EMBL" id="CP002684">
    <property type="protein sequence ID" value="AEE35931.1"/>
    <property type="molecule type" value="Genomic_DNA"/>
</dbReference>
<dbReference type="EMBL" id="CP002684">
    <property type="protein sequence ID" value="AEE35932.1"/>
    <property type="molecule type" value="Genomic_DNA"/>
</dbReference>
<dbReference type="EMBL" id="AK117577">
    <property type="protein sequence ID" value="BAC42235.1"/>
    <property type="molecule type" value="mRNA"/>
</dbReference>
<dbReference type="EMBL" id="BT004598">
    <property type="protein sequence ID" value="AAO42844.1"/>
    <property type="molecule type" value="mRNA"/>
</dbReference>
<dbReference type="EMBL" id="AK175247">
    <property type="protein sequence ID" value="BAD43010.1"/>
    <property type="molecule type" value="mRNA"/>
</dbReference>
<dbReference type="EMBL" id="AK176270">
    <property type="protein sequence ID" value="BAD44033.1"/>
    <property type="molecule type" value="mRNA"/>
</dbReference>
<dbReference type="EMBL" id="AK227948">
    <property type="protein sequence ID" value="BAE99916.1"/>
    <property type="molecule type" value="mRNA"/>
</dbReference>
<dbReference type="EMBL" id="AY088709">
    <property type="protein sequence ID" value="AAM67028.1"/>
    <property type="molecule type" value="mRNA"/>
</dbReference>
<dbReference type="PIR" id="F96799">
    <property type="entry name" value="F96799"/>
</dbReference>
<dbReference type="RefSeq" id="NP_177833.3">
    <molecule id="Q9AT76-1"/>
    <property type="nucleotide sequence ID" value="NM_106358.4"/>
</dbReference>
<dbReference type="RefSeq" id="NP_850979.1">
    <molecule id="Q9AT76-3"/>
    <property type="nucleotide sequence ID" value="NM_180648.3"/>
</dbReference>
<dbReference type="RefSeq" id="NP_850980.2">
    <molecule id="Q9AT76-4"/>
    <property type="nucleotide sequence ID" value="NM_180649.4"/>
</dbReference>
<dbReference type="RefSeq" id="NP_974160.2">
    <molecule id="Q9AT76-2"/>
    <property type="nucleotide sequence ID" value="NM_202431.2"/>
</dbReference>
<dbReference type="SMR" id="Q9AT76"/>
<dbReference type="BioGRID" id="29261">
    <property type="interactions" value="15"/>
</dbReference>
<dbReference type="DIP" id="DIP-33758N"/>
<dbReference type="FunCoup" id="Q9AT76">
    <property type="interactions" value="101"/>
</dbReference>
<dbReference type="IntAct" id="Q9AT76">
    <property type="interactions" value="26"/>
</dbReference>
<dbReference type="STRING" id="3702.Q9AT76"/>
<dbReference type="PaxDb" id="3702-AT1G77080.4"/>
<dbReference type="EnsemblPlants" id="AT1G77080.2">
    <molecule id="Q9AT76-3"/>
    <property type="protein sequence ID" value="AT1G77080.2"/>
    <property type="gene ID" value="AT1G77080"/>
</dbReference>
<dbReference type="EnsemblPlants" id="AT1G77080.3">
    <molecule id="Q9AT76-4"/>
    <property type="protein sequence ID" value="AT1G77080.3"/>
    <property type="gene ID" value="AT1G77080"/>
</dbReference>
<dbReference type="EnsemblPlants" id="AT1G77080.4">
    <molecule id="Q9AT76-1"/>
    <property type="protein sequence ID" value="AT1G77080.4"/>
    <property type="gene ID" value="AT1G77080"/>
</dbReference>
<dbReference type="EnsemblPlants" id="AT1G77080.5">
    <molecule id="Q9AT76-2"/>
    <property type="protein sequence ID" value="AT1G77080.5"/>
    <property type="gene ID" value="AT1G77080"/>
</dbReference>
<dbReference type="GeneID" id="844042"/>
<dbReference type="Gramene" id="AT1G77080.2">
    <molecule id="Q9AT76-3"/>
    <property type="protein sequence ID" value="AT1G77080.2"/>
    <property type="gene ID" value="AT1G77080"/>
</dbReference>
<dbReference type="Gramene" id="AT1G77080.3">
    <molecule id="Q9AT76-4"/>
    <property type="protein sequence ID" value="AT1G77080.3"/>
    <property type="gene ID" value="AT1G77080"/>
</dbReference>
<dbReference type="Gramene" id="AT1G77080.4">
    <molecule id="Q9AT76-1"/>
    <property type="protein sequence ID" value="AT1G77080.4"/>
    <property type="gene ID" value="AT1G77080"/>
</dbReference>
<dbReference type="Gramene" id="AT1G77080.5">
    <molecule id="Q9AT76-2"/>
    <property type="protein sequence ID" value="AT1G77080.5"/>
    <property type="gene ID" value="AT1G77080"/>
</dbReference>
<dbReference type="KEGG" id="ath:AT1G77080"/>
<dbReference type="Araport" id="AT1G77080"/>
<dbReference type="TAIR" id="AT1G77080">
    <property type="gene designation" value="MAF1"/>
</dbReference>
<dbReference type="eggNOG" id="KOG0014">
    <property type="taxonomic scope" value="Eukaryota"/>
</dbReference>
<dbReference type="HOGENOM" id="CLU_053053_0_4_1"/>
<dbReference type="InParanoid" id="Q9AT76"/>
<dbReference type="OMA" id="IKDWRRT"/>
<dbReference type="PhylomeDB" id="Q9AT76"/>
<dbReference type="PRO" id="PR:Q9AT76"/>
<dbReference type="Proteomes" id="UP000006548">
    <property type="component" value="Chromosome 1"/>
</dbReference>
<dbReference type="ExpressionAtlas" id="Q9AT76">
    <property type="expression patterns" value="baseline and differential"/>
</dbReference>
<dbReference type="GO" id="GO:0005634">
    <property type="term" value="C:nucleus"/>
    <property type="evidence" value="ECO:0007669"/>
    <property type="project" value="UniProtKB-SubCell"/>
</dbReference>
<dbReference type="GO" id="GO:0003677">
    <property type="term" value="F:DNA binding"/>
    <property type="evidence" value="ECO:0007669"/>
    <property type="project" value="UniProtKB-KW"/>
</dbReference>
<dbReference type="GO" id="GO:0003700">
    <property type="term" value="F:DNA-binding transcription factor activity"/>
    <property type="evidence" value="ECO:0000250"/>
    <property type="project" value="TAIR"/>
</dbReference>
<dbReference type="GO" id="GO:0046983">
    <property type="term" value="F:protein dimerization activity"/>
    <property type="evidence" value="ECO:0007669"/>
    <property type="project" value="InterPro"/>
</dbReference>
<dbReference type="GO" id="GO:0009908">
    <property type="term" value="P:flower development"/>
    <property type="evidence" value="ECO:0007669"/>
    <property type="project" value="UniProtKB-KW"/>
</dbReference>
<dbReference type="GO" id="GO:0048573">
    <property type="term" value="P:photoperiodism, flowering"/>
    <property type="evidence" value="ECO:0000315"/>
    <property type="project" value="TAIR"/>
</dbReference>
<dbReference type="GO" id="GO:0006355">
    <property type="term" value="P:regulation of DNA-templated transcription"/>
    <property type="evidence" value="ECO:0000250"/>
    <property type="project" value="TAIR"/>
</dbReference>
<dbReference type="GO" id="GO:0009909">
    <property type="term" value="P:regulation of flower development"/>
    <property type="evidence" value="ECO:0000315"/>
    <property type="project" value="TAIR"/>
</dbReference>
<dbReference type="FunFam" id="3.40.1810.10:FF:000020">
    <property type="entry name" value="MADS-box protein FLOWERING LOCUS C"/>
    <property type="match status" value="1"/>
</dbReference>
<dbReference type="Gene3D" id="3.40.1810.10">
    <property type="entry name" value="Transcription factor, MADS-box"/>
    <property type="match status" value="1"/>
</dbReference>
<dbReference type="InterPro" id="IPR050142">
    <property type="entry name" value="MADS-box/MEF2_TF"/>
</dbReference>
<dbReference type="InterPro" id="IPR002487">
    <property type="entry name" value="TF_Kbox"/>
</dbReference>
<dbReference type="InterPro" id="IPR002100">
    <property type="entry name" value="TF_MADSbox"/>
</dbReference>
<dbReference type="InterPro" id="IPR036879">
    <property type="entry name" value="TF_MADSbox_sf"/>
</dbReference>
<dbReference type="PANTHER" id="PTHR48019">
    <property type="entry name" value="SERUM RESPONSE FACTOR HOMOLOG"/>
    <property type="match status" value="1"/>
</dbReference>
<dbReference type="Pfam" id="PF01486">
    <property type="entry name" value="K-box"/>
    <property type="match status" value="1"/>
</dbReference>
<dbReference type="Pfam" id="PF00319">
    <property type="entry name" value="SRF-TF"/>
    <property type="match status" value="1"/>
</dbReference>
<dbReference type="PRINTS" id="PR00404">
    <property type="entry name" value="MADSDOMAIN"/>
</dbReference>
<dbReference type="SMART" id="SM00432">
    <property type="entry name" value="MADS"/>
    <property type="match status" value="1"/>
</dbReference>
<dbReference type="SUPFAM" id="SSF55455">
    <property type="entry name" value="SRF-like"/>
    <property type="match status" value="1"/>
</dbReference>
<dbReference type="PROSITE" id="PS51297">
    <property type="entry name" value="K_BOX"/>
    <property type="match status" value="1"/>
</dbReference>
<dbReference type="PROSITE" id="PS50066">
    <property type="entry name" value="MADS_BOX_2"/>
    <property type="match status" value="1"/>
</dbReference>
<sequence length="196" mass="22119">MGRRKIEIKRIENKSSRQVTFSKRRNGLIDKARQLSILCESSVAVVVVSASGKLYDSSSGDDISKIIDRYEIQHADELRALDLEEKIQNYLPHKELLETVQSKLEEPNVDNVSVDSLISLEEQLETALSVSRARKAELMMEYIESLKEKEKLLREENQVLASQMGKNTLLATDDERGMFPGSSSGNKIPETLPLLN</sequence>
<organism>
    <name type="scientific">Arabidopsis thaliana</name>
    <name type="common">Mouse-ear cress</name>
    <dbReference type="NCBI Taxonomy" id="3702"/>
    <lineage>
        <taxon>Eukaryota</taxon>
        <taxon>Viridiplantae</taxon>
        <taxon>Streptophyta</taxon>
        <taxon>Embryophyta</taxon>
        <taxon>Tracheophyta</taxon>
        <taxon>Spermatophyta</taxon>
        <taxon>Magnoliopsida</taxon>
        <taxon>eudicotyledons</taxon>
        <taxon>Gunneridae</taxon>
        <taxon>Pentapetalae</taxon>
        <taxon>rosids</taxon>
        <taxon>malvids</taxon>
        <taxon>Brassicales</taxon>
        <taxon>Brassicaceae</taxon>
        <taxon>Camelineae</taxon>
        <taxon>Arabidopsis</taxon>
    </lineage>
</organism>
<accession>Q9AT76</accession>
<accession>O49291</accession>
<accession>Q7XYY7</accession>
<accession>Q9FPN8</accession>
<accession>Q9FPN9</accession>
<feature type="chain" id="PRO_0000412532" description="Agamous-like MADS-box protein AGL27">
    <location>
        <begin position="1"/>
        <end position="196"/>
    </location>
</feature>
<feature type="domain" description="MADS-box" evidence="1">
    <location>
        <begin position="1"/>
        <end position="61"/>
    </location>
</feature>
<feature type="domain" description="K-box" evidence="2">
    <location>
        <begin position="80"/>
        <end position="170"/>
    </location>
</feature>
<feature type="region of interest" description="Disordered" evidence="3">
    <location>
        <begin position="175"/>
        <end position="196"/>
    </location>
</feature>
<feature type="splice variant" id="VSP_041692" description="In isoform 4." evidence="16">
    <original>MGRRKIEIKRIENKSSRQVTFSKRRNGLIDKARQLSILCESSVAVVVVSASGKLYDSSSGDD</original>
    <variation>MHFCFISS</variation>
    <location>
        <begin position="1"/>
        <end position="62"/>
    </location>
</feature>
<feature type="splice variant" id="VSP_041693" description="In isoform 3." evidence="15">
    <original>DISKIIDRYEIQHADELRA</original>
    <variation>EIEALFKPEKPQCFE</variation>
    <location>
        <begin position="62"/>
        <end position="80"/>
    </location>
</feature>
<feature type="splice variant" id="VSP_041694" description="In isoform 4." evidence="16">
    <original>Q</original>
    <variation>QRLAVRHIFLPSSSDKKNVFFLLSTCEY</variation>
    <location>
        <position position="101"/>
    </location>
</feature>
<feature type="splice variant" id="VSP_041695" description="In isoform 4." evidence="16">
    <original>EKLLREENQVLASQMGKNT</original>
    <variation>VSALVFIFDKGHILGYDDS</variation>
    <location>
        <begin position="150"/>
        <end position="168"/>
    </location>
</feature>
<feature type="splice variant" id="VSP_041696" description="In isoform 2." evidence="15">
    <original>MGKNTLLATD</original>
    <variation>LSEKKGMSHR</variation>
    <location>
        <begin position="164"/>
        <end position="173"/>
    </location>
</feature>
<feature type="splice variant" id="VSP_041697" description="In isoform 4." evidence="16">
    <location>
        <begin position="169"/>
        <end position="196"/>
    </location>
</feature>
<feature type="splice variant" id="VSP_041698" description="In isoform 2." evidence="15">
    <location>
        <begin position="174"/>
        <end position="196"/>
    </location>
</feature>
<comment type="function">
    <text evidence="5 8 11 14">Probable transcription factor involved in the negative regulation of flowering time in both long and short days, probably through the photoperiodic and vernalization pathways. Prevents premature flowering.</text>
</comment>
<comment type="subunit">
    <text evidence="12">Interacts with AGL39, AGL97 and AGL74.</text>
</comment>
<comment type="interaction">
    <interactant intactId="EBI-16074648">
        <id>Q9AT76-1</id>
    </interactant>
    <interactant intactId="EBI-592058">
        <id>Q9FVC1</id>
        <label>SVP</label>
    </interactant>
    <organismsDiffer>false</organismsDiffer>
    <experiments>7</experiments>
</comment>
<comment type="interaction">
    <interactant intactId="EBI-16074648">
        <id>Q9AT76-1</id>
    </interactant>
    <interactant intactId="EBI-16100490">
        <id>Q2NJQ2</id>
        <label>AYWB_224</label>
    </interactant>
    <organismsDiffer>true</organismsDiffer>
    <experiments>3</experiments>
</comment>
<comment type="subcellular location">
    <subcellularLocation>
        <location evidence="1">Nucleus</location>
    </subcellularLocation>
</comment>
<comment type="alternative products">
    <event type="alternative splicing"/>
    <isoform>
        <id>Q9AT76-1</id>
        <name>1</name>
        <sequence type="displayed"/>
    </isoform>
    <isoform>
        <id>Q9AT76-2</id>
        <name>2</name>
        <name>AGL27-I</name>
        <sequence type="described" ref="VSP_041696 VSP_041698"/>
    </isoform>
    <isoform>
        <id>Q9AT76-3</id>
        <name>3</name>
        <name>AGL27-II</name>
        <sequence type="described" ref="VSP_041693"/>
    </isoform>
    <isoform>
        <id>Q9AT76-4</id>
        <name>4</name>
        <sequence type="described" ref="VSP_041692 VSP_041694 VSP_041695 VSP_041697"/>
    </isoform>
</comment>
<comment type="tissue specificity">
    <text evidence="4 5 6 7">Expressed in most plant tissues, embryo, seedlings, roots, leaves, stems, inflorescence, pollen, siliques and flowers.</text>
</comment>
<comment type="induction">
    <text evidence="5 9 10 13">Slightly repressed by vernalization. Negatively regulated at the chromatin level by VIL1 through the photoperiod and vernalization pathways. Requires EARLY FLOWERING 7 (ELF7) and ELF8 to be expressed. Up-regulated by HUA2.</text>
</comment>
<comment type="disruption phenotype">
    <text evidence="8 11 14">Suppress the late-flowering phenotype of photoperiod-pathway mutants. Affects natural variation in flowering behavior in both long and short days.</text>
</comment>
<comment type="miscellaneous">
    <text evidence="18">The early flowering of cv. Nd-1 (especially in short days) is due to a deletion of AGL27. This deletion is associated with the QTL 'FLOWERING 1' (FLW1) (PubMed:15695584).</text>
</comment>
<comment type="sequence caution" evidence="17">
    <conflict type="erroneous gene model prediction">
        <sequence resource="EMBL-CDS" id="AAC00628"/>
    </conflict>
</comment>
<protein>
    <recommendedName>
        <fullName>Agamous-like MADS-box protein AGL27</fullName>
    </recommendedName>
    <alternativeName>
        <fullName>MADS box FLC1-like nuclear protein</fullName>
    </alternativeName>
    <alternativeName>
        <fullName>Protein FLOWERING LOCUS M</fullName>
    </alternativeName>
    <alternativeName>
        <fullName>Protein MADS AFFECTING FLOWERING 1</fullName>
    </alternativeName>
</protein>